<organism>
    <name type="scientific">Salmonella enteritidis PT4 (strain P125109)</name>
    <dbReference type="NCBI Taxonomy" id="550537"/>
    <lineage>
        <taxon>Bacteria</taxon>
        <taxon>Pseudomonadati</taxon>
        <taxon>Pseudomonadota</taxon>
        <taxon>Gammaproteobacteria</taxon>
        <taxon>Enterobacterales</taxon>
        <taxon>Enterobacteriaceae</taxon>
        <taxon>Salmonella</taxon>
    </lineage>
</organism>
<name>CCA_SALEP</name>
<reference key="1">
    <citation type="journal article" date="2008" name="Genome Res.">
        <title>Comparative genome analysis of Salmonella enteritidis PT4 and Salmonella gallinarum 287/91 provides insights into evolutionary and host adaptation pathways.</title>
        <authorList>
            <person name="Thomson N.R."/>
            <person name="Clayton D.J."/>
            <person name="Windhorst D."/>
            <person name="Vernikos G."/>
            <person name="Davidson S."/>
            <person name="Churcher C."/>
            <person name="Quail M.A."/>
            <person name="Stevens M."/>
            <person name="Jones M.A."/>
            <person name="Watson M."/>
            <person name="Barron A."/>
            <person name="Layton A."/>
            <person name="Pickard D."/>
            <person name="Kingsley R.A."/>
            <person name="Bignell A."/>
            <person name="Clark L."/>
            <person name="Harris B."/>
            <person name="Ormond D."/>
            <person name="Abdellah Z."/>
            <person name="Brooks K."/>
            <person name="Cherevach I."/>
            <person name="Chillingworth T."/>
            <person name="Woodward J."/>
            <person name="Norberczak H."/>
            <person name="Lord A."/>
            <person name="Arrowsmith C."/>
            <person name="Jagels K."/>
            <person name="Moule S."/>
            <person name="Mungall K."/>
            <person name="Saunders M."/>
            <person name="Whitehead S."/>
            <person name="Chabalgoity J.A."/>
            <person name="Maskell D."/>
            <person name="Humphreys T."/>
            <person name="Roberts M."/>
            <person name="Barrow P.A."/>
            <person name="Dougan G."/>
            <person name="Parkhill J."/>
        </authorList>
    </citation>
    <scope>NUCLEOTIDE SEQUENCE [LARGE SCALE GENOMIC DNA]</scope>
    <source>
        <strain>P125109</strain>
    </source>
</reference>
<keyword id="KW-0067">ATP-binding</keyword>
<keyword id="KW-0378">Hydrolase</keyword>
<keyword id="KW-0460">Magnesium</keyword>
<keyword id="KW-0479">Metal-binding</keyword>
<keyword id="KW-0511">Multifunctional enzyme</keyword>
<keyword id="KW-0533">Nickel</keyword>
<keyword id="KW-0547">Nucleotide-binding</keyword>
<keyword id="KW-0548">Nucleotidyltransferase</keyword>
<keyword id="KW-0692">RNA repair</keyword>
<keyword id="KW-0694">RNA-binding</keyword>
<keyword id="KW-0808">Transferase</keyword>
<keyword id="KW-0819">tRNA processing</keyword>
<dbReference type="EC" id="2.7.7.72" evidence="1"/>
<dbReference type="EC" id="3.1.3.-" evidence="1"/>
<dbReference type="EC" id="3.1.4.-" evidence="1"/>
<dbReference type="EMBL" id="AM933172">
    <property type="protein sequence ID" value="CAR34622.1"/>
    <property type="molecule type" value="Genomic_DNA"/>
</dbReference>
<dbReference type="RefSeq" id="WP_000708447.1">
    <property type="nucleotide sequence ID" value="NC_011294.1"/>
</dbReference>
<dbReference type="SMR" id="B5QZ40"/>
<dbReference type="KEGG" id="set:SEN3046"/>
<dbReference type="HOGENOM" id="CLU_015961_1_1_6"/>
<dbReference type="Proteomes" id="UP000000613">
    <property type="component" value="Chromosome"/>
</dbReference>
<dbReference type="GO" id="GO:0005524">
    <property type="term" value="F:ATP binding"/>
    <property type="evidence" value="ECO:0007669"/>
    <property type="project" value="UniProtKB-UniRule"/>
</dbReference>
<dbReference type="GO" id="GO:0004810">
    <property type="term" value="F:CCA tRNA nucleotidyltransferase activity"/>
    <property type="evidence" value="ECO:0007669"/>
    <property type="project" value="UniProtKB-UniRule"/>
</dbReference>
<dbReference type="GO" id="GO:0004112">
    <property type="term" value="F:cyclic-nucleotide phosphodiesterase activity"/>
    <property type="evidence" value="ECO:0007669"/>
    <property type="project" value="UniProtKB-UniRule"/>
</dbReference>
<dbReference type="GO" id="GO:0000287">
    <property type="term" value="F:magnesium ion binding"/>
    <property type="evidence" value="ECO:0007669"/>
    <property type="project" value="UniProtKB-UniRule"/>
</dbReference>
<dbReference type="GO" id="GO:0016791">
    <property type="term" value="F:phosphatase activity"/>
    <property type="evidence" value="ECO:0007669"/>
    <property type="project" value="UniProtKB-UniRule"/>
</dbReference>
<dbReference type="GO" id="GO:0000049">
    <property type="term" value="F:tRNA binding"/>
    <property type="evidence" value="ECO:0007669"/>
    <property type="project" value="UniProtKB-UniRule"/>
</dbReference>
<dbReference type="GO" id="GO:0042245">
    <property type="term" value="P:RNA repair"/>
    <property type="evidence" value="ECO:0007669"/>
    <property type="project" value="UniProtKB-KW"/>
</dbReference>
<dbReference type="GO" id="GO:0001680">
    <property type="term" value="P:tRNA 3'-terminal CCA addition"/>
    <property type="evidence" value="ECO:0007669"/>
    <property type="project" value="UniProtKB-UniRule"/>
</dbReference>
<dbReference type="CDD" id="cd00077">
    <property type="entry name" value="HDc"/>
    <property type="match status" value="1"/>
</dbReference>
<dbReference type="CDD" id="cd05398">
    <property type="entry name" value="NT_ClassII-CCAase"/>
    <property type="match status" value="1"/>
</dbReference>
<dbReference type="FunFam" id="1.10.3090.10:FF:000001">
    <property type="entry name" value="Multifunctional CCA protein"/>
    <property type="match status" value="1"/>
</dbReference>
<dbReference type="FunFam" id="3.30.460.10:FF:000016">
    <property type="entry name" value="Multifunctional CCA protein"/>
    <property type="match status" value="1"/>
</dbReference>
<dbReference type="Gene3D" id="3.30.460.10">
    <property type="entry name" value="Beta Polymerase, domain 2"/>
    <property type="match status" value="1"/>
</dbReference>
<dbReference type="Gene3D" id="1.10.3090.10">
    <property type="entry name" value="cca-adding enzyme, domain 2"/>
    <property type="match status" value="1"/>
</dbReference>
<dbReference type="HAMAP" id="MF_01261">
    <property type="entry name" value="CCA_bact_type1"/>
    <property type="match status" value="1"/>
</dbReference>
<dbReference type="HAMAP" id="MF_01262">
    <property type="entry name" value="CCA_bact_type2"/>
    <property type="match status" value="1"/>
</dbReference>
<dbReference type="InterPro" id="IPR012006">
    <property type="entry name" value="CCA_bact"/>
</dbReference>
<dbReference type="InterPro" id="IPR003607">
    <property type="entry name" value="HD/PDEase_dom"/>
</dbReference>
<dbReference type="InterPro" id="IPR006674">
    <property type="entry name" value="HD_domain"/>
</dbReference>
<dbReference type="InterPro" id="IPR043519">
    <property type="entry name" value="NT_sf"/>
</dbReference>
<dbReference type="InterPro" id="IPR002646">
    <property type="entry name" value="PolA_pol_head_dom"/>
</dbReference>
<dbReference type="InterPro" id="IPR032828">
    <property type="entry name" value="PolyA_RNA-bd"/>
</dbReference>
<dbReference type="InterPro" id="IPR050124">
    <property type="entry name" value="tRNA_CCA-adding_enzyme"/>
</dbReference>
<dbReference type="NCBIfam" id="NF008137">
    <property type="entry name" value="PRK10885.1"/>
    <property type="match status" value="1"/>
</dbReference>
<dbReference type="PANTHER" id="PTHR47545">
    <property type="entry name" value="MULTIFUNCTIONAL CCA PROTEIN"/>
    <property type="match status" value="1"/>
</dbReference>
<dbReference type="PANTHER" id="PTHR47545:SF1">
    <property type="entry name" value="MULTIFUNCTIONAL CCA PROTEIN"/>
    <property type="match status" value="1"/>
</dbReference>
<dbReference type="Pfam" id="PF01966">
    <property type="entry name" value="HD"/>
    <property type="match status" value="1"/>
</dbReference>
<dbReference type="Pfam" id="PF01743">
    <property type="entry name" value="PolyA_pol"/>
    <property type="match status" value="1"/>
</dbReference>
<dbReference type="Pfam" id="PF12627">
    <property type="entry name" value="PolyA_pol_RNAbd"/>
    <property type="match status" value="1"/>
</dbReference>
<dbReference type="PIRSF" id="PIRSF000813">
    <property type="entry name" value="CCA_bact"/>
    <property type="match status" value="1"/>
</dbReference>
<dbReference type="SMART" id="SM00471">
    <property type="entry name" value="HDc"/>
    <property type="match status" value="1"/>
</dbReference>
<dbReference type="SUPFAM" id="SSF81301">
    <property type="entry name" value="Nucleotidyltransferase"/>
    <property type="match status" value="1"/>
</dbReference>
<dbReference type="SUPFAM" id="SSF81891">
    <property type="entry name" value="Poly A polymerase C-terminal region-like"/>
    <property type="match status" value="1"/>
</dbReference>
<dbReference type="PROSITE" id="PS51831">
    <property type="entry name" value="HD"/>
    <property type="match status" value="1"/>
</dbReference>
<comment type="function">
    <text evidence="1">Catalyzes the addition and repair of the essential 3'-terminal CCA sequence in tRNAs without using a nucleic acid template. Adds these three nucleotides in the order of C, C, and A to the tRNA nucleotide-73, using CTP and ATP as substrates and producing inorganic pyrophosphate. tRNA 3'-terminal CCA addition is required both for tRNA processing and repair. Also involved in tRNA surveillance by mediating tandem CCA addition to generate a CCACCA at the 3' terminus of unstable tRNAs. While stable tRNAs receive only 3'-terminal CCA, unstable tRNAs are marked with CCACCA and rapidly degraded.</text>
</comment>
<comment type="catalytic activity">
    <reaction evidence="1">
        <text>a tRNA precursor + 2 CTP + ATP = a tRNA with a 3' CCA end + 3 diphosphate</text>
        <dbReference type="Rhea" id="RHEA:14433"/>
        <dbReference type="Rhea" id="RHEA-COMP:10465"/>
        <dbReference type="Rhea" id="RHEA-COMP:10468"/>
        <dbReference type="ChEBI" id="CHEBI:30616"/>
        <dbReference type="ChEBI" id="CHEBI:33019"/>
        <dbReference type="ChEBI" id="CHEBI:37563"/>
        <dbReference type="ChEBI" id="CHEBI:74896"/>
        <dbReference type="ChEBI" id="CHEBI:83071"/>
        <dbReference type="EC" id="2.7.7.72"/>
    </reaction>
</comment>
<comment type="catalytic activity">
    <reaction evidence="1">
        <text>a tRNA with a 3' CCA end + 2 CTP + ATP = a tRNA with a 3' CCACCA end + 3 diphosphate</text>
        <dbReference type="Rhea" id="RHEA:76235"/>
        <dbReference type="Rhea" id="RHEA-COMP:10468"/>
        <dbReference type="Rhea" id="RHEA-COMP:18655"/>
        <dbReference type="ChEBI" id="CHEBI:30616"/>
        <dbReference type="ChEBI" id="CHEBI:33019"/>
        <dbReference type="ChEBI" id="CHEBI:37563"/>
        <dbReference type="ChEBI" id="CHEBI:83071"/>
        <dbReference type="ChEBI" id="CHEBI:195187"/>
    </reaction>
    <physiologicalReaction direction="left-to-right" evidence="1">
        <dbReference type="Rhea" id="RHEA:76236"/>
    </physiologicalReaction>
</comment>
<comment type="cofactor">
    <cofactor evidence="1">
        <name>Mg(2+)</name>
        <dbReference type="ChEBI" id="CHEBI:18420"/>
    </cofactor>
    <text evidence="1">Magnesium is required for nucleotidyltransferase activity.</text>
</comment>
<comment type="cofactor">
    <cofactor evidence="1">
        <name>Ni(2+)</name>
        <dbReference type="ChEBI" id="CHEBI:49786"/>
    </cofactor>
    <text evidence="1">Nickel for phosphatase activity.</text>
</comment>
<comment type="subunit">
    <text evidence="1">Monomer. Can also form homodimers and oligomers.</text>
</comment>
<comment type="domain">
    <text evidence="1">Comprises two domains: an N-terminal domain containing the nucleotidyltransferase activity and a C-terminal HD domain associated with both phosphodiesterase and phosphatase activities.</text>
</comment>
<comment type="miscellaneous">
    <text evidence="1">A single active site specifically recognizes both ATP and CTP and is responsible for their addition.</text>
</comment>
<comment type="similarity">
    <text evidence="1">Belongs to the tRNA nucleotidyltransferase/poly(A) polymerase family. Bacterial CCA-adding enzyme type 1 subfamily.</text>
</comment>
<evidence type="ECO:0000255" key="1">
    <source>
        <dbReference type="HAMAP-Rule" id="MF_01261"/>
    </source>
</evidence>
<protein>
    <recommendedName>
        <fullName evidence="1">Multifunctional CCA protein</fullName>
    </recommendedName>
    <domain>
        <recommendedName>
            <fullName evidence="1">CCA-adding enzyme</fullName>
            <ecNumber evidence="1">2.7.7.72</ecNumber>
        </recommendedName>
        <alternativeName>
            <fullName evidence="1">CCA tRNA nucleotidyltransferase</fullName>
        </alternativeName>
        <alternativeName>
            <fullName evidence="1">tRNA CCA-pyrophosphorylase</fullName>
        </alternativeName>
        <alternativeName>
            <fullName evidence="1">tRNA adenylyl-/cytidylyl-transferase</fullName>
        </alternativeName>
        <alternativeName>
            <fullName evidence="1">tRNA nucleotidyltransferase</fullName>
        </alternativeName>
        <alternativeName>
            <fullName evidence="1">tRNA-NT</fullName>
        </alternativeName>
    </domain>
    <domain>
        <recommendedName>
            <fullName evidence="1">2'-nucleotidase</fullName>
            <ecNumber evidence="1">3.1.3.-</ecNumber>
        </recommendedName>
    </domain>
    <domain>
        <recommendedName>
            <fullName evidence="1">2',3'-cyclic phosphodiesterase</fullName>
            <ecNumber evidence="1">3.1.4.-</ecNumber>
        </recommendedName>
    </domain>
    <domain>
        <recommendedName>
            <fullName evidence="1">Phosphatase</fullName>
            <ecNumber evidence="1">3.1.3.-</ecNumber>
        </recommendedName>
    </domain>
</protein>
<gene>
    <name evidence="1" type="primary">cca</name>
    <name type="ordered locus">SEN3046</name>
</gene>
<accession>B5QZ40</accession>
<sequence length="413" mass="46576">MKIYLVGGAVRDALLGLPVKDKDWVVVGATPQEMLDAGYQQVGRDFPVFLHPQTHEEYALARTERKSGSGYTGFTCYAAPDVTLEADLQRRDLTINALARDDDGQIIDPYHGRRDLEARLLRHVSPAFGEDPLRVLRVARFAARYAHLSFRIADETLALMREMTAAGELEHLTPERVWKETENALTTRNPQVYFQVLRDCGALRVLFPEIDALFGVPAPAKWHPEIDTGVHTLMTLSMAAMLSPQLDVRFATLCHDLGKGLTPKNLWPRHHGHGPAGVKLVEQLCQRLRVPNDLRDLAKLVAEYHDLIHTFPILQPKTIVKLFDAIDAWRKPQRVEQIALTSEADVRGRTGFEASDYPQGRWLREAWQVAQAVPTKEVVEAGFKGIEIREELTKRRIAAVANWKEKRCPNPAS</sequence>
<feature type="chain" id="PRO_1000140047" description="Multifunctional CCA protein">
    <location>
        <begin position="1"/>
        <end position="413"/>
    </location>
</feature>
<feature type="domain" description="HD" evidence="1">
    <location>
        <begin position="228"/>
        <end position="329"/>
    </location>
</feature>
<feature type="binding site" evidence="1">
    <location>
        <position position="8"/>
    </location>
    <ligand>
        <name>ATP</name>
        <dbReference type="ChEBI" id="CHEBI:30616"/>
    </ligand>
</feature>
<feature type="binding site" evidence="1">
    <location>
        <position position="8"/>
    </location>
    <ligand>
        <name>CTP</name>
        <dbReference type="ChEBI" id="CHEBI:37563"/>
    </ligand>
</feature>
<feature type="binding site" evidence="1">
    <location>
        <position position="11"/>
    </location>
    <ligand>
        <name>ATP</name>
        <dbReference type="ChEBI" id="CHEBI:30616"/>
    </ligand>
</feature>
<feature type="binding site" evidence="1">
    <location>
        <position position="11"/>
    </location>
    <ligand>
        <name>CTP</name>
        <dbReference type="ChEBI" id="CHEBI:37563"/>
    </ligand>
</feature>
<feature type="binding site" evidence="1">
    <location>
        <position position="21"/>
    </location>
    <ligand>
        <name>Mg(2+)</name>
        <dbReference type="ChEBI" id="CHEBI:18420"/>
    </ligand>
</feature>
<feature type="binding site" evidence="1">
    <location>
        <position position="23"/>
    </location>
    <ligand>
        <name>Mg(2+)</name>
        <dbReference type="ChEBI" id="CHEBI:18420"/>
    </ligand>
</feature>
<feature type="binding site" evidence="1">
    <location>
        <position position="91"/>
    </location>
    <ligand>
        <name>ATP</name>
        <dbReference type="ChEBI" id="CHEBI:30616"/>
    </ligand>
</feature>
<feature type="binding site" evidence="1">
    <location>
        <position position="91"/>
    </location>
    <ligand>
        <name>CTP</name>
        <dbReference type="ChEBI" id="CHEBI:37563"/>
    </ligand>
</feature>
<feature type="binding site" evidence="1">
    <location>
        <position position="137"/>
    </location>
    <ligand>
        <name>ATP</name>
        <dbReference type="ChEBI" id="CHEBI:30616"/>
    </ligand>
</feature>
<feature type="binding site" evidence="1">
    <location>
        <position position="137"/>
    </location>
    <ligand>
        <name>CTP</name>
        <dbReference type="ChEBI" id="CHEBI:37563"/>
    </ligand>
</feature>
<feature type="binding site" evidence="1">
    <location>
        <position position="140"/>
    </location>
    <ligand>
        <name>ATP</name>
        <dbReference type="ChEBI" id="CHEBI:30616"/>
    </ligand>
</feature>
<feature type="binding site" evidence="1">
    <location>
        <position position="140"/>
    </location>
    <ligand>
        <name>CTP</name>
        <dbReference type="ChEBI" id="CHEBI:37563"/>
    </ligand>
</feature>
<proteinExistence type="inferred from homology"/>